<accession>Q0CD12</accession>
<organism>
    <name type="scientific">Aspergillus terreus (strain NIH 2624 / FGSC A1156)</name>
    <dbReference type="NCBI Taxonomy" id="341663"/>
    <lineage>
        <taxon>Eukaryota</taxon>
        <taxon>Fungi</taxon>
        <taxon>Dikarya</taxon>
        <taxon>Ascomycota</taxon>
        <taxon>Pezizomycotina</taxon>
        <taxon>Eurotiomycetes</taxon>
        <taxon>Eurotiomycetidae</taxon>
        <taxon>Eurotiales</taxon>
        <taxon>Aspergillaceae</taxon>
        <taxon>Aspergillus</taxon>
        <taxon>Aspergillus subgen. Circumdati</taxon>
    </lineage>
</organism>
<sequence>MGESKCPVNFAGGGTRNKDWWPDQLRLNILRQHTSASNPLDADFDYAAAFNSLDYNALKKDLEALMTDSQDWWPADFGHYGGLFIRMAWHSAGTYRVFDGRGGAGQGQQRFAPLNSWPDNASLDKARRLLWPIKQKYGNKISWADLMILAGNVALESMGFKPFGFSGGRADTWEADESVYWGGEKTWFPKGNDVRYPNDDIYTRDLENPLAASHMGLIYVNPEGPNGNPDPKAAARDIRVTFGRMAMNDEETVALIAGGHSFGKTHGASSGDHCGPEPEAAGLEAQGLGWQSKYGSGSGRDAITSGLEVTWTKTPTRWSTNFLEYLFAFDWELTKSPAGANQWVAKNADAIIPDAFDPSKKHKPQMLTTDLALRYDPAYEKIARRFLENPDQFADAFARAWFKLTHRDMGPRARYVGPEVPSEVLIWQDPIPAVNHPLVDASDIASLKQAILNSGVDRSKFVSTAWAAASTFRGGDKRGGANGARIRLAPQRDWEVNNQPWLKESLAALEKIQSSFNGSRSDRKKISLADLIVLAGCAAVESAAQEAGHAVSVPFTPGRMDASQEETDVESFSHMEPVADGFRNYSTAPTRRRAEHYLVDKAQMLTLSAPEMTALVGGLRALNANYDGSAHGVFTSRPGYLTNDFFVNLLDMGTTWKPTDASGELYEGADRRTGSKKWTATRVDLVFGSHAELRAIAEVYGSSDGERKFVKDFVAAWNKVMNLDRFDLKRENVPARL</sequence>
<name>KATG_ASPTN</name>
<protein>
    <recommendedName>
        <fullName evidence="1">Catalase-peroxidase</fullName>
        <shortName evidence="1">CP</shortName>
        <ecNumber evidence="1">1.11.1.21</ecNumber>
    </recommendedName>
    <alternativeName>
        <fullName evidence="1">Peroxidase/catalase</fullName>
    </alternativeName>
</protein>
<feature type="chain" id="PRO_0000354103" description="Catalase-peroxidase">
    <location>
        <begin position="1"/>
        <end position="737"/>
    </location>
</feature>
<feature type="active site" description="Proton acceptor" evidence="1">
    <location>
        <position position="90"/>
    </location>
</feature>
<feature type="binding site" description="axial binding residue" evidence="1">
    <location>
        <position position="260"/>
    </location>
    <ligand>
        <name>heme b</name>
        <dbReference type="ChEBI" id="CHEBI:60344"/>
    </ligand>
    <ligandPart>
        <name>Fe</name>
        <dbReference type="ChEBI" id="CHEBI:18248"/>
    </ligandPart>
</feature>
<feature type="site" description="Transition state stabilizer" evidence="1">
    <location>
        <position position="86"/>
    </location>
</feature>
<feature type="cross-link" description="Tryptophyl-tyrosyl-methioninium (Trp-Tyr) (with M-245)" evidence="1">
    <location>
        <begin position="89"/>
        <end position="219"/>
    </location>
</feature>
<feature type="cross-link" description="Tryptophyl-tyrosyl-methioninium (Tyr-Met) (with W-89)" evidence="1">
    <location>
        <begin position="219"/>
        <end position="245"/>
    </location>
</feature>
<keyword id="KW-0963">Cytoplasm</keyword>
<keyword id="KW-0349">Heme</keyword>
<keyword id="KW-0376">Hydrogen peroxide</keyword>
<keyword id="KW-0408">Iron</keyword>
<keyword id="KW-0479">Metal-binding</keyword>
<keyword id="KW-0560">Oxidoreductase</keyword>
<keyword id="KW-0575">Peroxidase</keyword>
<keyword id="KW-1185">Reference proteome</keyword>
<dbReference type="EC" id="1.11.1.21" evidence="1"/>
<dbReference type="EMBL" id="CH476605">
    <property type="protein sequence ID" value="EAU31595.1"/>
    <property type="molecule type" value="Genomic_DNA"/>
</dbReference>
<dbReference type="RefSeq" id="XP_001217043.1">
    <property type="nucleotide sequence ID" value="XM_001217043.1"/>
</dbReference>
<dbReference type="SMR" id="Q0CD12"/>
<dbReference type="STRING" id="341663.Q0CD12"/>
<dbReference type="PeroxiBase" id="3413">
    <property type="entry name" value="AteCP01"/>
</dbReference>
<dbReference type="EnsemblFungi" id="EAU31595">
    <property type="protein sequence ID" value="EAU31595"/>
    <property type="gene ID" value="ATEG_08422"/>
</dbReference>
<dbReference type="GeneID" id="4353293"/>
<dbReference type="VEuPathDB" id="FungiDB:ATEG_08422"/>
<dbReference type="eggNOG" id="ENOG502QTDY">
    <property type="taxonomic scope" value="Eukaryota"/>
</dbReference>
<dbReference type="HOGENOM" id="CLU_025424_2_0_1"/>
<dbReference type="OMA" id="GPETTWL"/>
<dbReference type="OrthoDB" id="407695at2759"/>
<dbReference type="Proteomes" id="UP000007963">
    <property type="component" value="Unassembled WGS sequence"/>
</dbReference>
<dbReference type="GO" id="GO:0005829">
    <property type="term" value="C:cytosol"/>
    <property type="evidence" value="ECO:0007669"/>
    <property type="project" value="TreeGrafter"/>
</dbReference>
<dbReference type="GO" id="GO:0004096">
    <property type="term" value="F:catalase activity"/>
    <property type="evidence" value="ECO:0007669"/>
    <property type="project" value="UniProtKB-UniRule"/>
</dbReference>
<dbReference type="GO" id="GO:0020037">
    <property type="term" value="F:heme binding"/>
    <property type="evidence" value="ECO:0007669"/>
    <property type="project" value="InterPro"/>
</dbReference>
<dbReference type="GO" id="GO:0046872">
    <property type="term" value="F:metal ion binding"/>
    <property type="evidence" value="ECO:0007669"/>
    <property type="project" value="UniProtKB-KW"/>
</dbReference>
<dbReference type="GO" id="GO:0070301">
    <property type="term" value="P:cellular response to hydrogen peroxide"/>
    <property type="evidence" value="ECO:0007669"/>
    <property type="project" value="TreeGrafter"/>
</dbReference>
<dbReference type="GO" id="GO:0042744">
    <property type="term" value="P:hydrogen peroxide catabolic process"/>
    <property type="evidence" value="ECO:0007669"/>
    <property type="project" value="UniProtKB-KW"/>
</dbReference>
<dbReference type="CDD" id="cd00649">
    <property type="entry name" value="catalase_peroxidase_1"/>
    <property type="match status" value="1"/>
</dbReference>
<dbReference type="CDD" id="cd08200">
    <property type="entry name" value="catalase_peroxidase_2"/>
    <property type="match status" value="1"/>
</dbReference>
<dbReference type="FunFam" id="1.10.420.10:FF:000002">
    <property type="entry name" value="Catalase-peroxidase"/>
    <property type="match status" value="1"/>
</dbReference>
<dbReference type="FunFam" id="1.10.420.10:FF:000004">
    <property type="entry name" value="Catalase-peroxidase"/>
    <property type="match status" value="1"/>
</dbReference>
<dbReference type="FunFam" id="1.10.520.10:FF:000002">
    <property type="entry name" value="Catalase-peroxidase"/>
    <property type="match status" value="1"/>
</dbReference>
<dbReference type="Gene3D" id="1.10.520.10">
    <property type="match status" value="2"/>
</dbReference>
<dbReference type="Gene3D" id="1.10.420.10">
    <property type="entry name" value="Peroxidase, domain 2"/>
    <property type="match status" value="2"/>
</dbReference>
<dbReference type="HAMAP" id="MF_01961">
    <property type="entry name" value="Catal_peroxid"/>
    <property type="match status" value="1"/>
</dbReference>
<dbReference type="InterPro" id="IPR000763">
    <property type="entry name" value="Catalase_peroxidase"/>
</dbReference>
<dbReference type="InterPro" id="IPR002016">
    <property type="entry name" value="Haem_peroxidase"/>
</dbReference>
<dbReference type="InterPro" id="IPR010255">
    <property type="entry name" value="Haem_peroxidase_sf"/>
</dbReference>
<dbReference type="InterPro" id="IPR019794">
    <property type="entry name" value="Peroxidases_AS"/>
</dbReference>
<dbReference type="InterPro" id="IPR019793">
    <property type="entry name" value="Peroxidases_heam-ligand_BS"/>
</dbReference>
<dbReference type="NCBIfam" id="TIGR00198">
    <property type="entry name" value="cat_per_HPI"/>
    <property type="match status" value="1"/>
</dbReference>
<dbReference type="NCBIfam" id="NF011635">
    <property type="entry name" value="PRK15061.1"/>
    <property type="match status" value="1"/>
</dbReference>
<dbReference type="PANTHER" id="PTHR30555:SF0">
    <property type="entry name" value="CATALASE-PEROXIDASE"/>
    <property type="match status" value="1"/>
</dbReference>
<dbReference type="PANTHER" id="PTHR30555">
    <property type="entry name" value="HYDROPEROXIDASE I, BIFUNCTIONAL CATALASE-PEROXIDASE"/>
    <property type="match status" value="1"/>
</dbReference>
<dbReference type="Pfam" id="PF00141">
    <property type="entry name" value="peroxidase"/>
    <property type="match status" value="2"/>
</dbReference>
<dbReference type="PRINTS" id="PR00460">
    <property type="entry name" value="BPEROXIDASE"/>
</dbReference>
<dbReference type="PRINTS" id="PR00458">
    <property type="entry name" value="PEROXIDASE"/>
</dbReference>
<dbReference type="SUPFAM" id="SSF48113">
    <property type="entry name" value="Heme-dependent peroxidases"/>
    <property type="match status" value="2"/>
</dbReference>
<dbReference type="PROSITE" id="PS00435">
    <property type="entry name" value="PEROXIDASE_1"/>
    <property type="match status" value="1"/>
</dbReference>
<dbReference type="PROSITE" id="PS00436">
    <property type="entry name" value="PEROXIDASE_2"/>
    <property type="match status" value="1"/>
</dbReference>
<dbReference type="PROSITE" id="PS50873">
    <property type="entry name" value="PEROXIDASE_4"/>
    <property type="match status" value="1"/>
</dbReference>
<proteinExistence type="inferred from homology"/>
<gene>
    <name evidence="1" type="primary">katG</name>
    <name type="ORF">ATEG_08422</name>
</gene>
<reference key="1">
    <citation type="submission" date="2005-09" db="EMBL/GenBank/DDBJ databases">
        <title>Annotation of the Aspergillus terreus NIH2624 genome.</title>
        <authorList>
            <person name="Birren B.W."/>
            <person name="Lander E.S."/>
            <person name="Galagan J.E."/>
            <person name="Nusbaum C."/>
            <person name="Devon K."/>
            <person name="Henn M."/>
            <person name="Ma L.-J."/>
            <person name="Jaffe D.B."/>
            <person name="Butler J."/>
            <person name="Alvarez P."/>
            <person name="Gnerre S."/>
            <person name="Grabherr M."/>
            <person name="Kleber M."/>
            <person name="Mauceli E.W."/>
            <person name="Brockman W."/>
            <person name="Rounsley S."/>
            <person name="Young S.K."/>
            <person name="LaButti K."/>
            <person name="Pushparaj V."/>
            <person name="DeCaprio D."/>
            <person name="Crawford M."/>
            <person name="Koehrsen M."/>
            <person name="Engels R."/>
            <person name="Montgomery P."/>
            <person name="Pearson M."/>
            <person name="Howarth C."/>
            <person name="Larson L."/>
            <person name="Luoma S."/>
            <person name="White J."/>
            <person name="Alvarado L."/>
            <person name="Kodira C.D."/>
            <person name="Zeng Q."/>
            <person name="Oleary S."/>
            <person name="Yandava C."/>
            <person name="Denning D.W."/>
            <person name="Nierman W.C."/>
            <person name="Milne T."/>
            <person name="Madden K."/>
        </authorList>
    </citation>
    <scope>NUCLEOTIDE SEQUENCE [LARGE SCALE GENOMIC DNA]</scope>
    <source>
        <strain>NIH 2624 / FGSC A1156</strain>
    </source>
</reference>
<evidence type="ECO:0000255" key="1">
    <source>
        <dbReference type="HAMAP-Rule" id="MF_03108"/>
    </source>
</evidence>
<comment type="function">
    <text evidence="1">Bifunctional enzyme with both catalase and broad-spectrum peroxidase activity.</text>
</comment>
<comment type="catalytic activity">
    <reaction evidence="1">
        <text>H2O2 + AH2 = A + 2 H2O</text>
        <dbReference type="Rhea" id="RHEA:30275"/>
        <dbReference type="ChEBI" id="CHEBI:13193"/>
        <dbReference type="ChEBI" id="CHEBI:15377"/>
        <dbReference type="ChEBI" id="CHEBI:16240"/>
        <dbReference type="ChEBI" id="CHEBI:17499"/>
        <dbReference type="EC" id="1.11.1.21"/>
    </reaction>
</comment>
<comment type="catalytic activity">
    <reaction evidence="1">
        <text>2 H2O2 = O2 + 2 H2O</text>
        <dbReference type="Rhea" id="RHEA:20309"/>
        <dbReference type="ChEBI" id="CHEBI:15377"/>
        <dbReference type="ChEBI" id="CHEBI:15379"/>
        <dbReference type="ChEBI" id="CHEBI:16240"/>
        <dbReference type="EC" id="1.11.1.21"/>
    </reaction>
</comment>
<comment type="cofactor">
    <cofactor evidence="1">
        <name>heme b</name>
        <dbReference type="ChEBI" id="CHEBI:60344"/>
    </cofactor>
    <text evidence="1">Binds 1 heme b (iron(II)-protoporphyrin IX) group per monomer.</text>
</comment>
<comment type="subunit">
    <text evidence="1">Homodimer or homotetramer.</text>
</comment>
<comment type="subcellular location">
    <subcellularLocation>
        <location evidence="1">Cytoplasm</location>
    </subcellularLocation>
</comment>
<comment type="PTM">
    <text evidence="1">Formation of the three residue Trp-Tyr-Met cross-link is important for the catalase, but not the peroxidase activity of the enzyme.</text>
</comment>
<comment type="similarity">
    <text evidence="1">Belongs to the peroxidase family. Peroxidase/catalase subfamily.</text>
</comment>